<name>MCMD2_RAT</name>
<reference key="1">
    <citation type="journal article" date="2004" name="Genome Res.">
        <title>The status, quality, and expansion of the NIH full-length cDNA project: the Mammalian Gene Collection (MGC).</title>
        <authorList>
            <consortium name="The MGC Project Team"/>
        </authorList>
    </citation>
    <scope>NUCLEOTIDE SEQUENCE [LARGE SCALE MRNA]</scope>
    <source>
        <tissue>Testis</tissue>
    </source>
</reference>
<gene>
    <name type="primary">Mcmdc2</name>
</gene>
<keyword id="KW-0227">DNA damage</keyword>
<keyword id="KW-0234">DNA repair</keyword>
<keyword id="KW-0469">Meiosis</keyword>
<keyword id="KW-0597">Phosphoprotein</keyword>
<keyword id="KW-1185">Reference proteome</keyword>
<comment type="function">
    <text evidence="1">Plays an important role in meiotic recombination and associated DNA double-strand break repair.</text>
</comment>
<proteinExistence type="evidence at transcript level"/>
<accession>Q5XI14</accession>
<protein>
    <recommendedName>
        <fullName>Minichromosome maintenance domain-containing protein 2</fullName>
        <shortName>MCM domain-containing protein 2</shortName>
    </recommendedName>
</protein>
<organism>
    <name type="scientific">Rattus norvegicus</name>
    <name type="common">Rat</name>
    <dbReference type="NCBI Taxonomy" id="10116"/>
    <lineage>
        <taxon>Eukaryota</taxon>
        <taxon>Metazoa</taxon>
        <taxon>Chordata</taxon>
        <taxon>Craniata</taxon>
        <taxon>Vertebrata</taxon>
        <taxon>Euteleostomi</taxon>
        <taxon>Mammalia</taxon>
        <taxon>Eutheria</taxon>
        <taxon>Euarchontoglires</taxon>
        <taxon>Glires</taxon>
        <taxon>Rodentia</taxon>
        <taxon>Myomorpha</taxon>
        <taxon>Muroidea</taxon>
        <taxon>Muridae</taxon>
        <taxon>Murinae</taxon>
        <taxon>Rattus</taxon>
    </lineage>
</organism>
<sequence>MGKLPMKEAALVYLDRSGGLQKFMDDCKYYNDSKQSYAVYRFSILINPCDVVELDAELGNHILHHPLKAAQVFQSVCFVAVKTLSLIGKLQTETQINIVLKLTHLPSLPSYSLDLCEFPLNYASQRFYMMQGIVIAMTTVTKYTQGARFLCSDEVCPFSKGFQYIRVHVPGATESATVRNDFLCRLCSSSLQEDRKFRVLGDKQIIEIITTKVLHAFQGDPKNQPFRFQSLSVFLRDELVNKMKIGNEYKIIGIPVCVKTSQTALCVEANSITPYTAKVPSGISDNFRCLLSLTSSSCWRFTAILANVFASHIVPLGTYNLLKLCLLMSLVQTRDCSSERENCLDILVITSDTLLVDRLLNFSMNLVSRGIRHPVCTEVFPTVSRDKYGTGAVSIQAGSALLARGGVCFIGDLTSHKKDKLEQLQSALESRSVTVFIPGKKFGDDFDQQMTFPIQCSFWSFVDMDSSSRRNVQKASTLIGQMDCSLIPANLAEAFGLLVNCKESSPCHPLLPTVQHTLKKAVDPKGPPYLASKQFTTEDFEKLLAFAKNLNVEFSLEAERMIHGYYLASRRIRTDSIHGSKLSANALKYLVSLSEAHARLNLRNKVLREDVLIAALLFEISLTLKYGATAFCVAPNALFPFELYDEDYLEQRDLYLTQCQQQLQHFIATCGPGTAVLSSDE</sequence>
<evidence type="ECO:0000250" key="1">
    <source>
        <dbReference type="UniProtKB" id="E9Q956"/>
    </source>
</evidence>
<evidence type="ECO:0000250" key="2">
    <source>
        <dbReference type="UniProtKB" id="Q4G0Z9"/>
    </source>
</evidence>
<dbReference type="EMBL" id="BC083882">
    <property type="protein sequence ID" value="AAH83882.1"/>
    <property type="molecule type" value="mRNA"/>
</dbReference>
<dbReference type="RefSeq" id="NP_001019511.2">
    <property type="nucleotide sequence ID" value="NM_001024340.1"/>
</dbReference>
<dbReference type="SMR" id="Q5XI14"/>
<dbReference type="FunCoup" id="Q5XI14">
    <property type="interactions" value="435"/>
</dbReference>
<dbReference type="STRING" id="10116.ENSRNOP00000070565"/>
<dbReference type="iPTMnet" id="Q5XI14"/>
<dbReference type="PhosphoSitePlus" id="Q5XI14"/>
<dbReference type="PaxDb" id="10116-ENSRNOP00000037494"/>
<dbReference type="GeneID" id="500392"/>
<dbReference type="KEGG" id="rno:500392"/>
<dbReference type="UCSC" id="RGD:1561068">
    <property type="organism name" value="rat"/>
</dbReference>
<dbReference type="AGR" id="RGD:1561068"/>
<dbReference type="CTD" id="157777"/>
<dbReference type="RGD" id="1561068">
    <property type="gene designation" value="Mcmdc2"/>
</dbReference>
<dbReference type="eggNOG" id="KOG0480">
    <property type="taxonomic scope" value="Eukaryota"/>
</dbReference>
<dbReference type="InParanoid" id="Q5XI14"/>
<dbReference type="PhylomeDB" id="Q5XI14"/>
<dbReference type="TreeFam" id="TF332272"/>
<dbReference type="PRO" id="PR:Q5XI14"/>
<dbReference type="Proteomes" id="UP000002494">
    <property type="component" value="Unplaced"/>
</dbReference>
<dbReference type="GO" id="GO:0005634">
    <property type="term" value="C:nucleus"/>
    <property type="evidence" value="ECO:0000318"/>
    <property type="project" value="GO_Central"/>
</dbReference>
<dbReference type="GO" id="GO:0005524">
    <property type="term" value="F:ATP binding"/>
    <property type="evidence" value="ECO:0007669"/>
    <property type="project" value="InterPro"/>
</dbReference>
<dbReference type="GO" id="GO:0003677">
    <property type="term" value="F:DNA binding"/>
    <property type="evidence" value="ECO:0007669"/>
    <property type="project" value="InterPro"/>
</dbReference>
<dbReference type="GO" id="GO:1990918">
    <property type="term" value="P:double-strand break repair involved in meiotic recombination"/>
    <property type="evidence" value="ECO:0000266"/>
    <property type="project" value="RGD"/>
</dbReference>
<dbReference type="GO" id="GO:0000727">
    <property type="term" value="P:double-strand break repair via break-induced replication"/>
    <property type="evidence" value="ECO:0000318"/>
    <property type="project" value="GO_Central"/>
</dbReference>
<dbReference type="GO" id="GO:0042140">
    <property type="term" value="P:late meiotic recombination nodule assembly"/>
    <property type="evidence" value="ECO:0000266"/>
    <property type="project" value="RGD"/>
</dbReference>
<dbReference type="GO" id="GO:0007146">
    <property type="term" value="P:meiotic recombination nodule assembly"/>
    <property type="evidence" value="ECO:0000266"/>
    <property type="project" value="RGD"/>
</dbReference>
<dbReference type="GO" id="GO:0048477">
    <property type="term" value="P:oogenesis"/>
    <property type="evidence" value="ECO:0000266"/>
    <property type="project" value="RGD"/>
</dbReference>
<dbReference type="GO" id="GO:0007283">
    <property type="term" value="P:spermatogenesis"/>
    <property type="evidence" value="ECO:0000266"/>
    <property type="project" value="RGD"/>
</dbReference>
<dbReference type="GO" id="GO:0007130">
    <property type="term" value="P:synaptonemal complex assembly"/>
    <property type="evidence" value="ECO:0000266"/>
    <property type="project" value="RGD"/>
</dbReference>
<dbReference type="FunFam" id="3.40.50.300:FF:001155">
    <property type="entry name" value="minichromosome maintenance domain-containing protein 2"/>
    <property type="match status" value="1"/>
</dbReference>
<dbReference type="Gene3D" id="3.40.50.300">
    <property type="entry name" value="P-loop containing nucleotide triphosphate hydrolases"/>
    <property type="match status" value="1"/>
</dbReference>
<dbReference type="InterPro" id="IPR031327">
    <property type="entry name" value="MCM"/>
</dbReference>
<dbReference type="InterPro" id="IPR041562">
    <property type="entry name" value="MCM_lid"/>
</dbReference>
<dbReference type="InterPro" id="IPR012340">
    <property type="entry name" value="NA-bd_OB-fold"/>
</dbReference>
<dbReference type="InterPro" id="IPR027417">
    <property type="entry name" value="P-loop_NTPase"/>
</dbReference>
<dbReference type="PANTHER" id="PTHR11630">
    <property type="entry name" value="DNA REPLICATION LICENSING FACTOR MCM FAMILY MEMBER"/>
    <property type="match status" value="1"/>
</dbReference>
<dbReference type="PANTHER" id="PTHR11630:SF75">
    <property type="entry name" value="MINICHROMOSOME MAINTENANCE DOMAIN-CONTAINING PROTEIN 2"/>
    <property type="match status" value="1"/>
</dbReference>
<dbReference type="Pfam" id="PF17855">
    <property type="entry name" value="MCM_lid"/>
    <property type="match status" value="1"/>
</dbReference>
<dbReference type="SMART" id="SM00350">
    <property type="entry name" value="MCM"/>
    <property type="match status" value="1"/>
</dbReference>
<dbReference type="SUPFAM" id="SSF50249">
    <property type="entry name" value="Nucleic acid-binding proteins"/>
    <property type="match status" value="1"/>
</dbReference>
<feature type="chain" id="PRO_0000255259" description="Minichromosome maintenance domain-containing protein 2">
    <location>
        <begin position="1"/>
        <end position="681"/>
    </location>
</feature>
<feature type="domain" description="MCM">
    <location>
        <begin position="533"/>
        <end position="621"/>
    </location>
</feature>
<feature type="modified residue" description="Phosphoserine" evidence="2">
    <location>
        <position position="292"/>
    </location>
</feature>